<feature type="propeptide" id="PRO_0000424163" evidence="5">
    <location>
        <begin position="1"/>
        <end position="41"/>
    </location>
</feature>
<feature type="chain" id="PRO_0000424164" description="Versicolorin B synthase">
    <location>
        <begin position="22"/>
        <end position="643"/>
    </location>
</feature>
<feature type="binding site" evidence="1">
    <location>
        <begin position="84"/>
        <end position="85"/>
    </location>
    <ligand>
        <name>FAD</name>
        <dbReference type="ChEBI" id="CHEBI:57692"/>
    </ligand>
</feature>
<feature type="binding site" evidence="1">
    <location>
        <begin position="105"/>
        <end position="106"/>
    </location>
    <ligand>
        <name>FAD</name>
        <dbReference type="ChEBI" id="CHEBI:57692"/>
    </ligand>
</feature>
<feature type="binding site" evidence="1">
    <location>
        <begin position="171"/>
        <end position="174"/>
    </location>
    <ligand>
        <name>FAD</name>
        <dbReference type="ChEBI" id="CHEBI:57692"/>
    </ligand>
</feature>
<feature type="binding site" evidence="1">
    <location>
        <position position="613"/>
    </location>
    <ligand>
        <name>FAD</name>
        <dbReference type="ChEBI" id="CHEBI:57692"/>
    </ligand>
</feature>
<feature type="binding site" evidence="1">
    <location>
        <begin position="624"/>
        <end position="625"/>
    </location>
    <ligand>
        <name>FAD</name>
        <dbReference type="ChEBI" id="CHEBI:57692"/>
    </ligand>
</feature>
<feature type="glycosylation site" description="N-linked (GlcNAc...) asparagine" evidence="2">
    <location>
        <position position="116"/>
    </location>
</feature>
<feature type="glycosylation site" description="N-linked (GlcNAc...) asparagine" evidence="2">
    <location>
        <position position="221"/>
    </location>
</feature>
<feature type="glycosylation site" description="N-linked (GlcNAc...) asparagine" evidence="2">
    <location>
        <position position="507"/>
    </location>
</feature>
<comment type="function">
    <text evidence="3 5 6 7 8 9 15 16">Dual cyclase; part of the gene cluster that mediates the biosynthesis of aflatoxins, a group of polyketide-derived furanocoumarins, and part of the most toxic and carcinogenic compounds among the known mycotoxins (PubMed:14602595, PubMed:15006741, PubMed:15094053, PubMed:15932995, PubMed:1731640, PubMed:8368837, PubMed:8662689, PubMed:8784203). The four major aflatoxins produced by A.parasiticus are aflatoxin B1 (AFB1), aflatoxin B2 (AFB2), aflatoxin G1 (AFG1) and aflatoxin G2 (AFG2) (PubMed:15006741). Aflk plays a dual role within the aflatoxin pathway, as a 5'-oxoaverantin cyclase that mediates conversion of 5'-oxoaverantin (OAVN) to averufin (AVF), as well as a versicolorin B synthase that converts versiconal (VAL) to versicolorin B (VERB) by closing the bisfuran ring of aflatoxin which is required for DNA-binding, thus giving to aflatoxin its activity as a mutagen (PubMed:14602595, PubMed:15006741, PubMed:15932995, PubMed:1731640, PubMed:8368837, PubMed:8662689, PubMed:8784203). The biosynthesis of aflatoxins begins with the norsolorinic acid synthase aflC that combines a hexanoyl starter unit produced by the fatty acid synthase aflA/aflB and 7 malonyl-CoA extender units to synthesize the precursor NOR. The second step is the conversion of NOR to averantin and requires the norsolorinic acid ketoreductase aflD, which catalyzes the dehydration of norsolorinic acid to form (1'S)-averantin. The norsolorinic acid reductases aflE and aflF may also play a role in the conversion of NOR to AVN. The cytochrome P450 monooxygenase aflG then catalyzes the hydroxylation of AVN to 5'hydroxyaverantin (HAVN). The next step is performed by the 5'-hydroxyaverantin dehydrogenase aflH that transforms HAVN to 5'-oxoaverantin (OAVN) which is further converted to averufin (AVF) by aflK that plays a dual role in the pathway, as a 5'-oxoaverantin cyclase that mediates conversion of 5'-oxoaverantin, as well as a versicolorin B synthase in a later step in the pathway. The averufin oxidase aflI catalyzes the conversion of AVF to versiconal hemiacetal acetate (VHA). VHA is then the substrate for the versiconal hemiacetal acetate esterase aflJ to yield versiconal (VAL). Versicolorin B synthase aflK then converts VAL to versicolorin B (VERB) by closing the bisfuran ring of aflatoxin which is required for DNA-binding, thus giving to aflatoxin its activity as a mutagen. Then, the activity of the versicolorin B desaturase aflL leads to versicolorin A (VERA). A branch point starts from VERB since it can also be converted to dihydrodemethylsterigmatocystin (DMDHST), probably also by aflL, VERA being a precursor for aflatoxins B1 and G1, and DMDHST for aflatoxins B2 and G2. Next, the versicolorin reductase aflM and the cytochrome P450 monooxygenase aflN are involved in conversion of VERA to demethylsterigmatocystin (DMST). AflX and aflY seem also involved in this step, through probable aflX-mediated epoxide ring-opening step following versicolorin A oxidation and aflY-mediated Baeyer-Villiger oxidation required for the formation of the xanthone ring. The methyltransferase aflO then leads to the modification of DMST to sterigmatocystin (ST), and of DMDHST to dihydrosterigmatocystin (DHST). Both ST and DHST are then substrates of the O-methyltransferase aflP to yield O-methylsterigmatocystin (OMST) and dihydro-O-methylsterigmatocystin (DHOMST), respectively. Finally OMST is converted to aflatoxins B1 and G1, and DHOMST to aflatoxins B2 and G2, via the action of several enzymes including O-methylsterigmatocystin oxidoreductase aflQ, the cytochrome P450 monooxygenase aflU, but also the NADH-dependent flavin oxidoreductase nadA which is specifically required for the synthesis of AFG1 (PubMed:15006741).</text>
</comment>
<comment type="catalytic activity">
    <reaction evidence="3 5 6 9">
        <text>(2S-3S)-versiconal hemiacetal = versicolorin B + H2O</text>
        <dbReference type="Rhea" id="RHEA:33859"/>
        <dbReference type="ChEBI" id="CHEBI:15377"/>
        <dbReference type="ChEBI" id="CHEBI:77950"/>
        <dbReference type="ChEBI" id="CHEBI:77951"/>
        <dbReference type="EC" id="4.2.1.143"/>
    </reaction>
</comment>
<comment type="catalytic activity">
    <reaction evidence="3 5 6 9">
        <text>(S)-5'-oxoaverantin + H(+) = (1'S,5'S)-averufin + H2O</text>
        <dbReference type="Rhea" id="RHEA:35671"/>
        <dbReference type="ChEBI" id="CHEBI:15377"/>
        <dbReference type="ChEBI" id="CHEBI:15378"/>
        <dbReference type="ChEBI" id="CHEBI:71537"/>
        <dbReference type="ChEBI" id="CHEBI:77933"/>
        <dbReference type="EC" id="4.2.1.142"/>
    </reaction>
</comment>
<comment type="cofactor">
    <cofactor evidence="1">
        <name>FAD</name>
        <dbReference type="ChEBI" id="CHEBI:57692"/>
    </cofactor>
</comment>
<comment type="biophysicochemical properties">
    <kinetics>
        <KM evidence="3 6">20 uM for 5'-oxoaverantin</KM>
        <KM evidence="3 6">3.1 uM for versiconal (at pH 6.0 and 30 degrees Celsius)</KM>
        <Vmax evidence="3 6">6.67 nmol/min/mg enzyme with 5'-oxoaverantin as substrate</Vmax>
        <Vmax evidence="3 6">0.15 umol/min/mg enzyme with versiconal (at pH 6.0 and 30 degrees Celsius) as substrate</Vmax>
    </kinetics>
    <phDependence>
        <text evidence="3 6">Optimum pH is 5.5.</text>
    </phDependence>
</comment>
<comment type="pathway">
    <text evidence="4 15">Mycotoxin biosynthesis; aflatoxin biosynthesis.</text>
</comment>
<comment type="subunit">
    <text evidence="3 5 8 9">Homodimer.</text>
</comment>
<comment type="subcellular location">
    <subcellularLocation>
        <location evidence="3 17">Cytoplasm</location>
        <location evidence="3 17">Cytosol</location>
    </subcellularLocation>
</comment>
<comment type="PTM">
    <text evidence="10">N-glycosylated.</text>
</comment>
<comment type="similarity">
    <text evidence="14">Belongs to the GMC oxidoreductase family.</text>
</comment>
<accession>Q12062</accession>
<accession>A0A0F0I0N8</accession>
<reference key="1">
    <citation type="journal article" date="1996" name="J. Biol. Chem.">
        <title>Isolation and characterization of the versicolorin B synthase gene from Aspergillus parasiticus. Expansion of the aflatoxin b1 biosynthetic gene cluster.</title>
        <authorList>
            <person name="Silva J.C."/>
            <person name="Minto R.E."/>
            <person name="Barry C.E."/>
            <person name="Holland K.A."/>
            <person name="Townsend C.A."/>
        </authorList>
    </citation>
    <scope>NUCLEOTIDE SEQUENCE [GENOMIC DNA / MRNA]</scope>
    <scope>PROTEIN SEQUENCE OF 163-180 AND 414-428</scope>
    <scope>FUNCTION</scope>
    <scope>SUBUNIT</scope>
    <source>
        <strain>ATCC 56775 / NRRL 5862 / SRRC 143 / SU-1</strain>
    </source>
</reference>
<reference key="2">
    <citation type="journal article" date="2004" name="FEBS Lett.">
        <title>Completed sequence of aflatoxin pathway gene cluster in Aspergillus parasiticus.</title>
        <authorList>
            <person name="Yu J."/>
            <person name="Bhatnagar D."/>
            <person name="Cleveland T.E."/>
        </authorList>
    </citation>
    <scope>NUCLEOTIDE SEQUENCE [GENOMIC DNA]</scope>
    <scope>FUNCTION</scope>
    <scope>PATHWAY</scope>
    <source>
        <strain>ATCC 56775 / NRRL 5862 / SRRC 143 / SU-1</strain>
    </source>
</reference>
<reference key="3">
    <citation type="submission" date="2015-02" db="EMBL/GenBank/DDBJ databases">
        <title>Draft genome sequence of Aspergillus parasiticus SU-1.</title>
        <authorList>
            <person name="Yu J."/>
            <person name="Fedorova N."/>
            <person name="Yin Y."/>
            <person name="Losada L."/>
            <person name="Zafar N."/>
            <person name="Taujale R."/>
            <person name="Ehrlich K.C."/>
            <person name="Bhatnagar D."/>
            <person name="Cleveland T.E."/>
            <person name="Bennett J.W."/>
            <person name="Nierman W.C."/>
        </authorList>
    </citation>
    <scope>NUCLEOTIDE SEQUENCE [LARGE SCALE GENOMIC DNA]</scope>
    <source>
        <strain>ATCC 56775 / NRRL 5862 / SRRC 143 / SU-1</strain>
    </source>
</reference>
<reference key="4">
    <citation type="journal article" date="2005" name="Appl. Environ. Microbiol.">
        <title>Aspergillus parasiticus cyclase catalyzes two dehydration steps in aflatoxin biosynthesis.</title>
        <authorList>
            <person name="Sakuno E."/>
            <person name="Wen Y."/>
            <person name="Hatabayashi H."/>
            <person name="Arai H."/>
            <person name="Aoki C."/>
            <person name="Yabe K."/>
            <person name="Nakajima H."/>
        </authorList>
    </citation>
    <scope>PROTEIN SEQUENCE OF 41-66</scope>
    <scope>FUNCTION</scope>
    <scope>CATALYTIC ACTIVITY</scope>
    <scope>SUBCELLULAR LOCATION</scope>
    <scope>SUBUNIT</scope>
</reference>
<reference key="5">
    <citation type="journal article" date="1992" name="Arch. Biochem. Biophys.">
        <title>Purification and properties of versiconal cyclase from Aspergillus parasiticus.</title>
        <authorList>
            <person name="Lin B.K."/>
            <person name="Anderson J.A."/>
        </authorList>
    </citation>
    <scope>FUNCTION</scope>
    <scope>CATALYTIC ACTIVITY</scope>
    <scope>BIOPHYSICOCHEMICAL PROPERTIES</scope>
    <source>
        <strain>ATCC 56775 / NRRL 5862 / SRRC 143 / SU-1</strain>
    </source>
</reference>
<reference key="6">
    <citation type="journal article" date="1993" name="Appl. Environ. Microbiol.">
        <title>Stereochemistry during aflatoxin biosynthesis: cyclase reaction in the conversion of versiconal to versicolorin B and racemization of versiconal hemiacetal acetate.</title>
        <authorList>
            <person name="Yabe K."/>
            <person name="Hamasaki T."/>
        </authorList>
    </citation>
    <scope>FUNCTION</scope>
</reference>
<reference key="7">
    <citation type="journal article" date="1996" name="Biochemistry">
        <title>Purification and characterization of versicolorin B synthase from Aspergillus parasiticus. Catalysis of the stereodifferentiating cyclization in aflatoxin biosynthesis essential to DNA interaction.</title>
        <authorList>
            <person name="McGuire S.M."/>
            <person name="Silva J.C."/>
            <person name="Casillas E.G."/>
            <person name="Townsend C.A."/>
        </authorList>
    </citation>
    <scope>FUNCTION</scope>
    <scope>CATALYTIC ACTIVITY</scope>
    <scope>SUBUNIT</scope>
</reference>
<reference key="8">
    <citation type="journal article" date="1997" name="J. Biol. Chem.">
        <title>Heterologous expression, isolation, and characterization of versicolorin B synthase from Aspergillus parasiticus. A key enzyme in the aflatoxin B1 biosynthetic pathway.</title>
        <authorList>
            <person name="Silva J.C."/>
            <person name="Townsend C.A."/>
        </authorList>
    </citation>
    <scope>GLYCOSYLATION</scope>
    <source>
        <strain>ATCC 56775 / NRRL 5862 / SRRC 143 / SU-1</strain>
    </source>
</reference>
<reference key="9">
    <citation type="journal article" date="2003" name="Appl. Environ. Microbiol.">
        <title>Involvement of two cytosolic enzymes and a novel intermediate, 5'-oxoaverantin, in the pathway from 5'-hydroxyaverantin to averufin in aflatoxin biosynthesis.</title>
        <authorList>
            <person name="Sakuno E."/>
            <person name="Yabe K."/>
            <person name="Nakajima H."/>
        </authorList>
    </citation>
    <scope>FUNCTION</scope>
    <scope>CATALYTIC ACTIVITY</scope>
    <scope>BIOPHYSICOCHEMICAL PROPERTIES</scope>
    <scope>SUBUNIT</scope>
    <scope>SUBCELLULAR LOCATION</scope>
</reference>
<reference key="10">
    <citation type="journal article" date="2004" name="Appl. Environ. Microbiol.">
        <title>Clustered pathway genes in aflatoxin biosynthesis.</title>
        <authorList>
            <person name="Yu J."/>
            <person name="Chang P.K."/>
            <person name="Ehrlich K.C."/>
            <person name="Cary J.W."/>
            <person name="Bhatnagar D."/>
            <person name="Cleveland T.E."/>
            <person name="Payne G.A."/>
            <person name="Linz J.E."/>
            <person name="Woloshuk C.P."/>
            <person name="Bennett J.W."/>
        </authorList>
    </citation>
    <scope>FUNCTION</scope>
    <scope>PATHWAY</scope>
    <scope>NOMENCLATURE</scope>
</reference>
<evidence type="ECO:0000250" key="1">
    <source>
        <dbReference type="UniProtKB" id="E4QP00"/>
    </source>
</evidence>
<evidence type="ECO:0000255" key="2"/>
<evidence type="ECO:0000269" key="3">
    <source>
    </source>
</evidence>
<evidence type="ECO:0000269" key="4">
    <source>
    </source>
</evidence>
<evidence type="ECO:0000269" key="5">
    <source>
    </source>
</evidence>
<evidence type="ECO:0000269" key="6">
    <source>
    </source>
</evidence>
<evidence type="ECO:0000269" key="7">
    <source>
    </source>
</evidence>
<evidence type="ECO:0000269" key="8">
    <source>
    </source>
</evidence>
<evidence type="ECO:0000269" key="9">
    <source>
    </source>
</evidence>
<evidence type="ECO:0000269" key="10">
    <source>
    </source>
</evidence>
<evidence type="ECO:0000303" key="11">
    <source>
    </source>
</evidence>
<evidence type="ECO:0000303" key="12">
    <source>
    </source>
</evidence>
<evidence type="ECO:0000303" key="13">
    <source>
    </source>
</evidence>
<evidence type="ECO:0000305" key="14"/>
<evidence type="ECO:0000305" key="15">
    <source>
    </source>
</evidence>
<evidence type="ECO:0000305" key="16">
    <source>
    </source>
</evidence>
<evidence type="ECO:0000305" key="17">
    <source>
    </source>
</evidence>
<keyword id="KW-0963">Cytoplasm</keyword>
<keyword id="KW-0903">Direct protein sequencing</keyword>
<keyword id="KW-0274">FAD</keyword>
<keyword id="KW-0285">Flavoprotein</keyword>
<keyword id="KW-0325">Glycoprotein</keyword>
<keyword id="KW-0456">Lyase</keyword>
<keyword id="KW-1185">Reference proteome</keyword>
<organism>
    <name type="scientific">Aspergillus parasiticus (strain ATCC 56775 / NRRL 5862 / SRRC 143 / SU-1)</name>
    <dbReference type="NCBI Taxonomy" id="1403190"/>
    <lineage>
        <taxon>Eukaryota</taxon>
        <taxon>Fungi</taxon>
        <taxon>Dikarya</taxon>
        <taxon>Ascomycota</taxon>
        <taxon>Pezizomycotina</taxon>
        <taxon>Eurotiomycetes</taxon>
        <taxon>Eurotiomycetidae</taxon>
        <taxon>Eurotiales</taxon>
        <taxon>Aspergillaceae</taxon>
        <taxon>Aspergillus</taxon>
        <taxon>Aspergillus subgen. Circumdati</taxon>
    </lineage>
</organism>
<dbReference type="EC" id="4.2.1.143" evidence="3 5 6 9"/>
<dbReference type="EC" id="4.2.1.142" evidence="3 5 6 9"/>
<dbReference type="EMBL" id="U51327">
    <property type="protein sequence ID" value="AAC49318.1"/>
    <property type="molecule type" value="Genomic_DNA"/>
</dbReference>
<dbReference type="EMBL" id="U51328">
    <property type="protein sequence ID" value="AAC49319.1"/>
    <property type="molecule type" value="mRNA"/>
</dbReference>
<dbReference type="EMBL" id="AY371490">
    <property type="protein sequence ID" value="AAS66012.1"/>
    <property type="molecule type" value="Genomic_DNA"/>
</dbReference>
<dbReference type="EMBL" id="JZEE01000729">
    <property type="protein sequence ID" value="KJK60751.1"/>
    <property type="molecule type" value="Genomic_DNA"/>
</dbReference>
<dbReference type="SMR" id="Q12062"/>
<dbReference type="STRING" id="1403190.Q12062"/>
<dbReference type="CAZy" id="AA3">
    <property type="family name" value="Auxiliary Activities 3"/>
</dbReference>
<dbReference type="GlyCosmos" id="Q12062">
    <property type="glycosylation" value="3 sites, No reported glycans"/>
</dbReference>
<dbReference type="KEGG" id="ag:AAC49318"/>
<dbReference type="OrthoDB" id="269227at2759"/>
<dbReference type="BioCyc" id="MetaCyc:MONOMER-14040"/>
<dbReference type="BRENDA" id="4.2.1.142">
    <property type="organism ID" value="523"/>
</dbReference>
<dbReference type="BRENDA" id="4.2.1.143">
    <property type="organism ID" value="523"/>
</dbReference>
<dbReference type="UniPathway" id="UPA00287"/>
<dbReference type="Proteomes" id="UP000033540">
    <property type="component" value="Unassembled WGS sequence"/>
</dbReference>
<dbReference type="GO" id="GO:0005829">
    <property type="term" value="C:cytosol"/>
    <property type="evidence" value="ECO:0000314"/>
    <property type="project" value="UniProt"/>
</dbReference>
<dbReference type="GO" id="GO:0009975">
    <property type="term" value="F:cyclase activity"/>
    <property type="evidence" value="ECO:0000314"/>
    <property type="project" value="UniProt"/>
</dbReference>
<dbReference type="GO" id="GO:0050660">
    <property type="term" value="F:flavin adenine dinucleotide binding"/>
    <property type="evidence" value="ECO:0007669"/>
    <property type="project" value="InterPro"/>
</dbReference>
<dbReference type="GO" id="GO:0016836">
    <property type="term" value="F:hydro-lyase activity"/>
    <property type="evidence" value="ECO:0000314"/>
    <property type="project" value="UniProtKB"/>
</dbReference>
<dbReference type="GO" id="GO:0016614">
    <property type="term" value="F:oxidoreductase activity, acting on CH-OH group of donors"/>
    <property type="evidence" value="ECO:0007669"/>
    <property type="project" value="InterPro"/>
</dbReference>
<dbReference type="GO" id="GO:0042803">
    <property type="term" value="F:protein homodimerization activity"/>
    <property type="evidence" value="ECO:0000314"/>
    <property type="project" value="UniProtKB"/>
</dbReference>
<dbReference type="GO" id="GO:0046572">
    <property type="term" value="F:versicolorin B synthase activity"/>
    <property type="evidence" value="ECO:0000314"/>
    <property type="project" value="UniProt"/>
</dbReference>
<dbReference type="GO" id="GO:0045122">
    <property type="term" value="P:aflatoxin biosynthetic process"/>
    <property type="evidence" value="ECO:0000314"/>
    <property type="project" value="GO_Central"/>
</dbReference>
<dbReference type="Gene3D" id="3.50.50.60">
    <property type="entry name" value="FAD/NAD(P)-binding domain"/>
    <property type="match status" value="1"/>
</dbReference>
<dbReference type="Gene3D" id="3.30.560.10">
    <property type="entry name" value="Glucose Oxidase, domain 3"/>
    <property type="match status" value="1"/>
</dbReference>
<dbReference type="InterPro" id="IPR036188">
    <property type="entry name" value="FAD/NAD-bd_sf"/>
</dbReference>
<dbReference type="InterPro" id="IPR012132">
    <property type="entry name" value="GMC_OxRdtase"/>
</dbReference>
<dbReference type="InterPro" id="IPR000172">
    <property type="entry name" value="GMC_OxRdtase_N"/>
</dbReference>
<dbReference type="InterPro" id="IPR007867">
    <property type="entry name" value="GMC_OxRtase_C"/>
</dbReference>
<dbReference type="PANTHER" id="PTHR11552:SF138">
    <property type="entry name" value="DEHYDROGENASE PKFF-RELATED"/>
    <property type="match status" value="1"/>
</dbReference>
<dbReference type="PANTHER" id="PTHR11552">
    <property type="entry name" value="GLUCOSE-METHANOL-CHOLINE GMC OXIDOREDUCTASE"/>
    <property type="match status" value="1"/>
</dbReference>
<dbReference type="Pfam" id="PF05199">
    <property type="entry name" value="GMC_oxred_C"/>
    <property type="match status" value="1"/>
</dbReference>
<dbReference type="Pfam" id="PF00732">
    <property type="entry name" value="GMC_oxred_N"/>
    <property type="match status" value="1"/>
</dbReference>
<dbReference type="PIRSF" id="PIRSF000137">
    <property type="entry name" value="Alcohol_oxidase"/>
    <property type="match status" value="1"/>
</dbReference>
<dbReference type="SUPFAM" id="SSF54373">
    <property type="entry name" value="FAD-linked reductases, C-terminal domain"/>
    <property type="match status" value="1"/>
</dbReference>
<dbReference type="SUPFAM" id="SSF51905">
    <property type="entry name" value="FAD/NAD(P)-binding domain"/>
    <property type="match status" value="1"/>
</dbReference>
<gene>
    <name evidence="12" type="primary">aflK</name>
    <name evidence="13" type="synonym">vbs</name>
    <name type="ORF">P875_00052980</name>
</gene>
<protein>
    <recommendedName>
        <fullName evidence="13">Versicolorin B synthase</fullName>
        <ecNumber evidence="3 5 6 9">4.2.1.143</ecNumber>
    </recommendedName>
    <alternativeName>
        <fullName evidence="11">5'-oxoaverantin cyclase</fullName>
        <ecNumber evidence="3 5 6 9">4.2.1.142</ecNumber>
    </alternativeName>
    <alternativeName>
        <fullName evidence="12">Aflatoxin biosynthesis protein K</fullName>
    </alternativeName>
</protein>
<proteinExistence type="evidence at protein level"/>
<sequence>MGRNWFQVTAMAVVPVVGIMAAVNPTILSSAASSLPSLGAMFTSDDFASQMDGRIQAQGLLSSHFGMYGWPGQSFDYVIVGGGTAGLAMARRLSQDGTASVAVIEAGGFYETDAGNATEVPMYLFNYFFDNGKVKNPLFDWYQYTTPQPGLAQREMFYMQGKTLGGSTARGAMLYHRGSKGAYDMWADHVGDDSYRWDKWLPYFQKSVHFSGPETNPRPANATALNDNTAFTASGGPVHVGYPFQVNAISSWVDRALAKMGFPEAQGFSNGNLLGRSYITHTINPYTRRRETASSSYLREALMESNNLNIFTRTLVKRVLFDDQNRATGVTVNTDGFEWQIGARKEVILSAGVMRSPQLLMVSGIGPKDHLEQLGIPVRSDLSGVGQNMQDTIILGPTVPVKVESHSQLMGNKETLPRAIREYNEQRKGLLTNPGQDYFAFEKHQPGMLKESTAADIDAAFPDDWPTFSYIALDDTFVPQYDGKNYFSMSAALMTPFSRGTVTINSNDTANPPIVDPQWLADPRDQEMAVAAFRRCREIVASDVMREVVAGPEILPGPQYQTDEEILNYIAETSDAYYAGVGTCAMGKADDPKAVVDSKARVLGVKGLRIVDASIFPFAIDGQPMGTVYALAEKIAAEMMAGQ</sequence>
<name>AFLK_ASPPU</name>